<name>IF2_MYCBP</name>
<dbReference type="EMBL" id="AM408590">
    <property type="protein sequence ID" value="CAL72848.1"/>
    <property type="molecule type" value="Genomic_DNA"/>
</dbReference>
<dbReference type="RefSeq" id="WP_003899505.1">
    <property type="nucleotide sequence ID" value="NC_008769.1"/>
</dbReference>
<dbReference type="SMR" id="A1KMI2"/>
<dbReference type="GeneID" id="45426826"/>
<dbReference type="KEGG" id="mbb:BCG_2859c"/>
<dbReference type="HOGENOM" id="CLU_006301_9_2_11"/>
<dbReference type="Proteomes" id="UP000001472">
    <property type="component" value="Chromosome"/>
</dbReference>
<dbReference type="GO" id="GO:0005829">
    <property type="term" value="C:cytosol"/>
    <property type="evidence" value="ECO:0007669"/>
    <property type="project" value="TreeGrafter"/>
</dbReference>
<dbReference type="GO" id="GO:0005525">
    <property type="term" value="F:GTP binding"/>
    <property type="evidence" value="ECO:0007669"/>
    <property type="project" value="UniProtKB-KW"/>
</dbReference>
<dbReference type="GO" id="GO:0003924">
    <property type="term" value="F:GTPase activity"/>
    <property type="evidence" value="ECO:0007669"/>
    <property type="project" value="UniProtKB-UniRule"/>
</dbReference>
<dbReference type="GO" id="GO:0003743">
    <property type="term" value="F:translation initiation factor activity"/>
    <property type="evidence" value="ECO:0007669"/>
    <property type="project" value="UniProtKB-UniRule"/>
</dbReference>
<dbReference type="CDD" id="cd01887">
    <property type="entry name" value="IF2_eIF5B"/>
    <property type="match status" value="1"/>
</dbReference>
<dbReference type="CDD" id="cd03702">
    <property type="entry name" value="IF2_mtIF2_II"/>
    <property type="match status" value="1"/>
</dbReference>
<dbReference type="CDD" id="cd03692">
    <property type="entry name" value="mtIF2_IVc"/>
    <property type="match status" value="1"/>
</dbReference>
<dbReference type="FunFam" id="1.10.10.2480:FF:000003">
    <property type="entry name" value="Translation initiation factor IF-2"/>
    <property type="match status" value="1"/>
</dbReference>
<dbReference type="FunFam" id="2.40.30.10:FF:000007">
    <property type="entry name" value="Translation initiation factor IF-2"/>
    <property type="match status" value="1"/>
</dbReference>
<dbReference type="FunFam" id="2.40.30.10:FF:000008">
    <property type="entry name" value="Translation initiation factor IF-2"/>
    <property type="match status" value="1"/>
</dbReference>
<dbReference type="FunFam" id="3.40.50.10050:FF:000001">
    <property type="entry name" value="Translation initiation factor IF-2"/>
    <property type="match status" value="1"/>
</dbReference>
<dbReference type="FunFam" id="3.40.50.300:FF:000019">
    <property type="entry name" value="Translation initiation factor IF-2"/>
    <property type="match status" value="1"/>
</dbReference>
<dbReference type="Gene3D" id="1.10.10.2480">
    <property type="match status" value="1"/>
</dbReference>
<dbReference type="Gene3D" id="3.40.50.300">
    <property type="entry name" value="P-loop containing nucleotide triphosphate hydrolases"/>
    <property type="match status" value="1"/>
</dbReference>
<dbReference type="Gene3D" id="2.40.30.10">
    <property type="entry name" value="Translation factors"/>
    <property type="match status" value="2"/>
</dbReference>
<dbReference type="Gene3D" id="3.40.50.10050">
    <property type="entry name" value="Translation initiation factor IF- 2, domain 3"/>
    <property type="match status" value="1"/>
</dbReference>
<dbReference type="HAMAP" id="MF_00100_B">
    <property type="entry name" value="IF_2_B"/>
    <property type="match status" value="1"/>
</dbReference>
<dbReference type="InterPro" id="IPR053905">
    <property type="entry name" value="EF-G-like_DII"/>
</dbReference>
<dbReference type="InterPro" id="IPR044145">
    <property type="entry name" value="IF2_II"/>
</dbReference>
<dbReference type="InterPro" id="IPR006847">
    <property type="entry name" value="IF2_N"/>
</dbReference>
<dbReference type="InterPro" id="IPR027417">
    <property type="entry name" value="P-loop_NTPase"/>
</dbReference>
<dbReference type="InterPro" id="IPR005225">
    <property type="entry name" value="Small_GTP-bd"/>
</dbReference>
<dbReference type="InterPro" id="IPR000795">
    <property type="entry name" value="T_Tr_GTP-bd_dom"/>
</dbReference>
<dbReference type="InterPro" id="IPR000178">
    <property type="entry name" value="TF_IF2_bacterial-like"/>
</dbReference>
<dbReference type="InterPro" id="IPR015760">
    <property type="entry name" value="TIF_IF2"/>
</dbReference>
<dbReference type="InterPro" id="IPR023115">
    <property type="entry name" value="TIF_IF2_dom3"/>
</dbReference>
<dbReference type="InterPro" id="IPR036925">
    <property type="entry name" value="TIF_IF2_dom3_sf"/>
</dbReference>
<dbReference type="InterPro" id="IPR009000">
    <property type="entry name" value="Transl_B-barrel_sf"/>
</dbReference>
<dbReference type="NCBIfam" id="TIGR00487">
    <property type="entry name" value="IF-2"/>
    <property type="match status" value="1"/>
</dbReference>
<dbReference type="NCBIfam" id="TIGR00231">
    <property type="entry name" value="small_GTP"/>
    <property type="match status" value="1"/>
</dbReference>
<dbReference type="PANTHER" id="PTHR43381:SF5">
    <property type="entry name" value="TR-TYPE G DOMAIN-CONTAINING PROTEIN"/>
    <property type="match status" value="1"/>
</dbReference>
<dbReference type="PANTHER" id="PTHR43381">
    <property type="entry name" value="TRANSLATION INITIATION FACTOR IF-2-RELATED"/>
    <property type="match status" value="1"/>
</dbReference>
<dbReference type="Pfam" id="PF22042">
    <property type="entry name" value="EF-G_D2"/>
    <property type="match status" value="1"/>
</dbReference>
<dbReference type="Pfam" id="PF00009">
    <property type="entry name" value="GTP_EFTU"/>
    <property type="match status" value="1"/>
</dbReference>
<dbReference type="Pfam" id="PF11987">
    <property type="entry name" value="IF-2"/>
    <property type="match status" value="1"/>
</dbReference>
<dbReference type="Pfam" id="PF04760">
    <property type="entry name" value="IF2_N"/>
    <property type="match status" value="2"/>
</dbReference>
<dbReference type="PRINTS" id="PR00315">
    <property type="entry name" value="ELONGATNFCT"/>
</dbReference>
<dbReference type="SUPFAM" id="SSF52156">
    <property type="entry name" value="Initiation factor IF2/eIF5b, domain 3"/>
    <property type="match status" value="1"/>
</dbReference>
<dbReference type="SUPFAM" id="SSF52540">
    <property type="entry name" value="P-loop containing nucleoside triphosphate hydrolases"/>
    <property type="match status" value="1"/>
</dbReference>
<dbReference type="SUPFAM" id="SSF50447">
    <property type="entry name" value="Translation proteins"/>
    <property type="match status" value="2"/>
</dbReference>
<dbReference type="PROSITE" id="PS51722">
    <property type="entry name" value="G_TR_2"/>
    <property type="match status" value="1"/>
</dbReference>
<dbReference type="PROSITE" id="PS01176">
    <property type="entry name" value="IF2"/>
    <property type="match status" value="1"/>
</dbReference>
<evidence type="ECO:0000250" key="1"/>
<evidence type="ECO:0000255" key="2">
    <source>
        <dbReference type="HAMAP-Rule" id="MF_00100"/>
    </source>
</evidence>
<evidence type="ECO:0000256" key="3">
    <source>
        <dbReference type="SAM" id="MobiDB-lite"/>
    </source>
</evidence>
<feature type="chain" id="PRO_1000008279" description="Translation initiation factor IF-2">
    <location>
        <begin position="1"/>
        <end position="900"/>
    </location>
</feature>
<feature type="domain" description="tr-type G">
    <location>
        <begin position="396"/>
        <end position="567"/>
    </location>
</feature>
<feature type="region of interest" description="Disordered" evidence="3">
    <location>
        <begin position="30"/>
        <end position="77"/>
    </location>
</feature>
<feature type="region of interest" description="Disordered" evidence="3">
    <location>
        <begin position="89"/>
        <end position="291"/>
    </location>
</feature>
<feature type="region of interest" description="G1" evidence="1">
    <location>
        <begin position="405"/>
        <end position="412"/>
    </location>
</feature>
<feature type="region of interest" description="G2" evidence="1">
    <location>
        <begin position="430"/>
        <end position="434"/>
    </location>
</feature>
<feature type="region of interest" description="G3" evidence="1">
    <location>
        <begin position="455"/>
        <end position="458"/>
    </location>
</feature>
<feature type="region of interest" description="G4" evidence="1">
    <location>
        <begin position="509"/>
        <end position="512"/>
    </location>
</feature>
<feature type="region of interest" description="G5" evidence="1">
    <location>
        <begin position="545"/>
        <end position="547"/>
    </location>
</feature>
<feature type="compositionally biased region" description="Low complexity" evidence="3">
    <location>
        <begin position="89"/>
        <end position="112"/>
    </location>
</feature>
<feature type="compositionally biased region" description="Pro residues" evidence="3">
    <location>
        <begin position="113"/>
        <end position="129"/>
    </location>
</feature>
<feature type="compositionally biased region" description="Low complexity" evidence="3">
    <location>
        <begin position="175"/>
        <end position="187"/>
    </location>
</feature>
<feature type="compositionally biased region" description="Gly residues" evidence="3">
    <location>
        <begin position="215"/>
        <end position="271"/>
    </location>
</feature>
<feature type="compositionally biased region" description="Basic residues" evidence="3">
    <location>
        <begin position="275"/>
        <end position="284"/>
    </location>
</feature>
<feature type="binding site" evidence="2">
    <location>
        <begin position="405"/>
        <end position="412"/>
    </location>
    <ligand>
        <name>GTP</name>
        <dbReference type="ChEBI" id="CHEBI:37565"/>
    </ligand>
</feature>
<feature type="binding site" evidence="2">
    <location>
        <begin position="455"/>
        <end position="459"/>
    </location>
    <ligand>
        <name>GTP</name>
        <dbReference type="ChEBI" id="CHEBI:37565"/>
    </ligand>
</feature>
<feature type="binding site" evidence="2">
    <location>
        <begin position="509"/>
        <end position="512"/>
    </location>
    <ligand>
        <name>GTP</name>
        <dbReference type="ChEBI" id="CHEBI:37565"/>
    </ligand>
</feature>
<proteinExistence type="inferred from homology"/>
<gene>
    <name evidence="2" type="primary">infB</name>
    <name type="ordered locus">BCG_2859c</name>
</gene>
<protein>
    <recommendedName>
        <fullName evidence="2">Translation initiation factor IF-2</fullName>
    </recommendedName>
</protein>
<comment type="function">
    <text evidence="2">One of the essential components for the initiation of protein synthesis. Protects formylmethionyl-tRNA from spontaneous hydrolysis and promotes its binding to the 30S ribosomal subunits. Also involved in the hydrolysis of GTP during the formation of the 70S ribosomal complex.</text>
</comment>
<comment type="subcellular location">
    <subcellularLocation>
        <location evidence="2">Cytoplasm</location>
    </subcellularLocation>
</comment>
<comment type="similarity">
    <text evidence="2">Belongs to the TRAFAC class translation factor GTPase superfamily. Classic translation factor GTPase family. IF-2 subfamily.</text>
</comment>
<keyword id="KW-0963">Cytoplasm</keyword>
<keyword id="KW-0342">GTP-binding</keyword>
<keyword id="KW-0396">Initiation factor</keyword>
<keyword id="KW-0547">Nucleotide-binding</keyword>
<keyword id="KW-0648">Protein biosynthesis</keyword>
<accession>A1KMI2</accession>
<organism>
    <name type="scientific">Mycobacterium bovis (strain BCG / Pasteur 1173P2)</name>
    <dbReference type="NCBI Taxonomy" id="410289"/>
    <lineage>
        <taxon>Bacteria</taxon>
        <taxon>Bacillati</taxon>
        <taxon>Actinomycetota</taxon>
        <taxon>Actinomycetes</taxon>
        <taxon>Mycobacteriales</taxon>
        <taxon>Mycobacteriaceae</taxon>
        <taxon>Mycobacterium</taxon>
        <taxon>Mycobacterium tuberculosis complex</taxon>
    </lineage>
</organism>
<sequence>MAAGKARVHELAKELGVTSKEVLARLSEQGEFVKSASSTVEAPVARRLRESFGGSKPAPAKGTAKSPGKGPDKSLDKALDAAIDMAAGNGKATAAPAKAADSGGAAIVSPTTPAAPEPPTAVPPSPQAPHPGMAPGARPGPVPKPGIRTPRVGNNPFSSAQPADRPIPRPPAPRPGTARPGVPRPGASPGSMPPRPGGAVGGARPPRPGAPRPGGRPGAPGAGRSDAGGGNYRGGGVGAAPGTGFRGRPGGGGGGRPGQRGGAAGAFGRPGGAPRRGRKSKRQKRQEYDSMQAPVVGGVRLPHGNGETIRLARGASLSDFADKIDANPAALVQALFNLGEMVTATQSVGDETLELLGSEMNYNVQVVSPEDEDRELLESFDLSYGEDEGGEEDLQVRPPVVTVMGHVDHGKTRLLDTIRKANVREAEAGGITQHIGAYQVAVDLDGSQRLITFIDTPGHEAFTAMRARGAKATDIAILVVAADDGVMPQTVEAINHAQAADVPIVVAVNKIDKEGADPAKIRGQLTEYGLVPEEFGGDTMFVDISAKQGTNIEALEEAVLLTADAALDLRANPDMEAQGVAIEAHLDRGRGPVATVLVQRGTLRVGDSVVAGDAYGRVRRMVDEHGEDVEVALPSRPVQVIGFTSVPGAGDNFLVVDEDRIARQIADRRSARKRNALAARSRKRISLEDLDSALKETSQLNLILKGDNAGTVEALEEALMGIQVDDEVVLRVIDRGVGGITETNVNLASASDAVIIGFNVRAEGKATELASREGVEIRYYSVIYQAIDEIEQALRGLLKPIYEENQLGRAEIRALFRSSKVGLIAGCLVTSGVMRRNAKARLLRDNIVVAENLSIASLRREKDDVTEVRDGFECGLTLGYADIKEGDVIESYELVQKERA</sequence>
<reference key="1">
    <citation type="journal article" date="2007" name="Proc. Natl. Acad. Sci. U.S.A.">
        <title>Genome plasticity of BCG and impact on vaccine efficacy.</title>
        <authorList>
            <person name="Brosch R."/>
            <person name="Gordon S.V."/>
            <person name="Garnier T."/>
            <person name="Eiglmeier K."/>
            <person name="Frigui W."/>
            <person name="Valenti P."/>
            <person name="Dos Santos S."/>
            <person name="Duthoy S."/>
            <person name="Lacroix C."/>
            <person name="Garcia-Pelayo C."/>
            <person name="Inwald J.K."/>
            <person name="Golby P."/>
            <person name="Garcia J.N."/>
            <person name="Hewinson R.G."/>
            <person name="Behr M.A."/>
            <person name="Quail M.A."/>
            <person name="Churcher C."/>
            <person name="Barrell B.G."/>
            <person name="Parkhill J."/>
            <person name="Cole S.T."/>
        </authorList>
    </citation>
    <scope>NUCLEOTIDE SEQUENCE [LARGE SCALE GENOMIC DNA]</scope>
    <source>
        <strain>BCG / Pasteur 1173P2</strain>
    </source>
</reference>